<gene>
    <name evidence="1" type="primary">rpmE</name>
    <name type="ordered locus">ASA_0129</name>
</gene>
<evidence type="ECO:0000255" key="1">
    <source>
        <dbReference type="HAMAP-Rule" id="MF_00501"/>
    </source>
</evidence>
<evidence type="ECO:0000305" key="2"/>
<name>RL31_AERS4</name>
<dbReference type="EMBL" id="CP000644">
    <property type="protein sequence ID" value="ABO88328.1"/>
    <property type="molecule type" value="Genomic_DNA"/>
</dbReference>
<dbReference type="RefSeq" id="WP_005318234.1">
    <property type="nucleotide sequence ID" value="NC_009348.1"/>
</dbReference>
<dbReference type="SMR" id="A4SHF6"/>
<dbReference type="STRING" id="29491.GCA_000820065_04111"/>
<dbReference type="GeneID" id="79881884"/>
<dbReference type="KEGG" id="asa:ASA_0129"/>
<dbReference type="eggNOG" id="COG0254">
    <property type="taxonomic scope" value="Bacteria"/>
</dbReference>
<dbReference type="HOGENOM" id="CLU_114306_4_3_6"/>
<dbReference type="Proteomes" id="UP000000225">
    <property type="component" value="Chromosome"/>
</dbReference>
<dbReference type="GO" id="GO:1990904">
    <property type="term" value="C:ribonucleoprotein complex"/>
    <property type="evidence" value="ECO:0007669"/>
    <property type="project" value="UniProtKB-KW"/>
</dbReference>
<dbReference type="GO" id="GO:0005840">
    <property type="term" value="C:ribosome"/>
    <property type="evidence" value="ECO:0007669"/>
    <property type="project" value="UniProtKB-KW"/>
</dbReference>
<dbReference type="GO" id="GO:0046872">
    <property type="term" value="F:metal ion binding"/>
    <property type="evidence" value="ECO:0007669"/>
    <property type="project" value="UniProtKB-KW"/>
</dbReference>
<dbReference type="GO" id="GO:0019843">
    <property type="term" value="F:rRNA binding"/>
    <property type="evidence" value="ECO:0007669"/>
    <property type="project" value="UniProtKB-KW"/>
</dbReference>
<dbReference type="GO" id="GO:0003735">
    <property type="term" value="F:structural constituent of ribosome"/>
    <property type="evidence" value="ECO:0007669"/>
    <property type="project" value="InterPro"/>
</dbReference>
<dbReference type="GO" id="GO:0006412">
    <property type="term" value="P:translation"/>
    <property type="evidence" value="ECO:0007669"/>
    <property type="project" value="UniProtKB-UniRule"/>
</dbReference>
<dbReference type="Gene3D" id="4.10.830.30">
    <property type="entry name" value="Ribosomal protein L31"/>
    <property type="match status" value="1"/>
</dbReference>
<dbReference type="HAMAP" id="MF_00501">
    <property type="entry name" value="Ribosomal_bL31_1"/>
    <property type="match status" value="1"/>
</dbReference>
<dbReference type="InterPro" id="IPR034704">
    <property type="entry name" value="Ribosomal_bL28/bL31-like_sf"/>
</dbReference>
<dbReference type="InterPro" id="IPR002150">
    <property type="entry name" value="Ribosomal_bL31"/>
</dbReference>
<dbReference type="InterPro" id="IPR027491">
    <property type="entry name" value="Ribosomal_bL31_A"/>
</dbReference>
<dbReference type="InterPro" id="IPR042105">
    <property type="entry name" value="Ribosomal_bL31_sf"/>
</dbReference>
<dbReference type="NCBIfam" id="TIGR00105">
    <property type="entry name" value="L31"/>
    <property type="match status" value="1"/>
</dbReference>
<dbReference type="NCBIfam" id="NF000612">
    <property type="entry name" value="PRK00019.1"/>
    <property type="match status" value="1"/>
</dbReference>
<dbReference type="NCBIfam" id="NF001809">
    <property type="entry name" value="PRK00528.1"/>
    <property type="match status" value="1"/>
</dbReference>
<dbReference type="PANTHER" id="PTHR33280">
    <property type="entry name" value="50S RIBOSOMAL PROTEIN L31, CHLOROPLASTIC"/>
    <property type="match status" value="1"/>
</dbReference>
<dbReference type="PANTHER" id="PTHR33280:SF6">
    <property type="entry name" value="LARGE RIBOSOMAL SUBUNIT PROTEIN BL31A"/>
    <property type="match status" value="1"/>
</dbReference>
<dbReference type="Pfam" id="PF01197">
    <property type="entry name" value="Ribosomal_L31"/>
    <property type="match status" value="1"/>
</dbReference>
<dbReference type="PRINTS" id="PR01249">
    <property type="entry name" value="RIBOSOMALL31"/>
</dbReference>
<dbReference type="SUPFAM" id="SSF143800">
    <property type="entry name" value="L28p-like"/>
    <property type="match status" value="1"/>
</dbReference>
<dbReference type="PROSITE" id="PS01143">
    <property type="entry name" value="RIBOSOMAL_L31"/>
    <property type="match status" value="1"/>
</dbReference>
<organism>
    <name type="scientific">Aeromonas salmonicida (strain A449)</name>
    <dbReference type="NCBI Taxonomy" id="382245"/>
    <lineage>
        <taxon>Bacteria</taxon>
        <taxon>Pseudomonadati</taxon>
        <taxon>Pseudomonadota</taxon>
        <taxon>Gammaproteobacteria</taxon>
        <taxon>Aeromonadales</taxon>
        <taxon>Aeromonadaceae</taxon>
        <taxon>Aeromonas</taxon>
    </lineage>
</organism>
<accession>A4SHF6</accession>
<comment type="function">
    <text evidence="1">Binds the 23S rRNA.</text>
</comment>
<comment type="cofactor">
    <cofactor evidence="1">
        <name>Zn(2+)</name>
        <dbReference type="ChEBI" id="CHEBI:29105"/>
    </cofactor>
    <text evidence="1">Binds 1 zinc ion per subunit.</text>
</comment>
<comment type="subunit">
    <text evidence="1">Part of the 50S ribosomal subunit.</text>
</comment>
<comment type="similarity">
    <text evidence="1">Belongs to the bacterial ribosomal protein bL31 family. Type A subfamily.</text>
</comment>
<reference key="1">
    <citation type="journal article" date="2008" name="BMC Genomics">
        <title>The genome of Aeromonas salmonicida subsp. salmonicida A449: insights into the evolution of a fish pathogen.</title>
        <authorList>
            <person name="Reith M.E."/>
            <person name="Singh R.K."/>
            <person name="Curtis B."/>
            <person name="Boyd J.M."/>
            <person name="Bouevitch A."/>
            <person name="Kimball J."/>
            <person name="Munholland J."/>
            <person name="Murphy C."/>
            <person name="Sarty D."/>
            <person name="Williams J."/>
            <person name="Nash J.H."/>
            <person name="Johnson S.C."/>
            <person name="Brown L.L."/>
        </authorList>
    </citation>
    <scope>NUCLEOTIDE SEQUENCE [LARGE SCALE GENOMIC DNA]</scope>
    <source>
        <strain>A449</strain>
    </source>
</reference>
<protein>
    <recommendedName>
        <fullName evidence="1">Large ribosomal subunit protein bL31</fullName>
    </recommendedName>
    <alternativeName>
        <fullName evidence="2">50S ribosomal protein L31</fullName>
    </alternativeName>
</protein>
<keyword id="KW-0479">Metal-binding</keyword>
<keyword id="KW-0687">Ribonucleoprotein</keyword>
<keyword id="KW-0689">Ribosomal protein</keyword>
<keyword id="KW-0694">RNA-binding</keyword>
<keyword id="KW-0699">rRNA-binding</keyword>
<keyword id="KW-0862">Zinc</keyword>
<proteinExistence type="inferred from homology"/>
<feature type="chain" id="PRO_1000126555" description="Large ribosomal subunit protein bL31">
    <location>
        <begin position="1"/>
        <end position="71"/>
    </location>
</feature>
<feature type="binding site" evidence="1">
    <location>
        <position position="16"/>
    </location>
    <ligand>
        <name>Zn(2+)</name>
        <dbReference type="ChEBI" id="CHEBI:29105"/>
    </ligand>
</feature>
<feature type="binding site" evidence="1">
    <location>
        <position position="18"/>
    </location>
    <ligand>
        <name>Zn(2+)</name>
        <dbReference type="ChEBI" id="CHEBI:29105"/>
    </ligand>
</feature>
<feature type="binding site" evidence="1">
    <location>
        <position position="37"/>
    </location>
    <ligand>
        <name>Zn(2+)</name>
        <dbReference type="ChEBI" id="CHEBI:29105"/>
    </ligand>
</feature>
<feature type="binding site" evidence="1">
    <location>
        <position position="40"/>
    </location>
    <ligand>
        <name>Zn(2+)</name>
        <dbReference type="ChEBI" id="CHEBI:29105"/>
    </ligand>
</feature>
<sequence length="71" mass="7658">MKAGIHPEYVAITAKCSCGNVINTFSTMGKDLNLDVCSACHPFYTGKQKEVSSGGRVDKFNKRFGGLTAKK</sequence>